<organism>
    <name type="scientific">Escherichia coli O157:H7</name>
    <dbReference type="NCBI Taxonomy" id="83334"/>
    <lineage>
        <taxon>Bacteria</taxon>
        <taxon>Pseudomonadati</taxon>
        <taxon>Pseudomonadota</taxon>
        <taxon>Gammaproteobacteria</taxon>
        <taxon>Enterobacterales</taxon>
        <taxon>Enterobacteriaceae</taxon>
        <taxon>Escherichia</taxon>
    </lineage>
</organism>
<dbReference type="EC" id="1.1.1.77"/>
<dbReference type="EMBL" id="AE005174">
    <property type="protein sequence ID" value="AAG57913.1"/>
    <property type="status" value="ALT_INIT"/>
    <property type="molecule type" value="Genomic_DNA"/>
</dbReference>
<dbReference type="EMBL" id="BA000007">
    <property type="protein sequence ID" value="BAB37082.2"/>
    <property type="molecule type" value="Genomic_DNA"/>
</dbReference>
<dbReference type="PIR" id="C91086">
    <property type="entry name" value="C91086"/>
</dbReference>
<dbReference type="PIR" id="E85931">
    <property type="entry name" value="E85931"/>
</dbReference>
<dbReference type="RefSeq" id="NP_311686.2">
    <property type="nucleotide sequence ID" value="NC_002695.1"/>
</dbReference>
<dbReference type="RefSeq" id="WP_000013588.1">
    <property type="nucleotide sequence ID" value="NZ_VOAI01000003.1"/>
</dbReference>
<dbReference type="SMR" id="P0A9S2"/>
<dbReference type="STRING" id="155864.Z4116"/>
<dbReference type="DNASU" id="958299"/>
<dbReference type="GeneID" id="916534"/>
<dbReference type="GeneID" id="93779199"/>
<dbReference type="KEGG" id="ece:Z4116"/>
<dbReference type="KEGG" id="ecs:ECs_3659"/>
<dbReference type="PATRIC" id="fig|386585.9.peg.3825"/>
<dbReference type="eggNOG" id="COG1454">
    <property type="taxonomic scope" value="Bacteria"/>
</dbReference>
<dbReference type="HOGENOM" id="CLU_007207_0_0_6"/>
<dbReference type="OMA" id="MNGFDKG"/>
<dbReference type="UniPathway" id="UPA00563"/>
<dbReference type="Proteomes" id="UP000000558">
    <property type="component" value="Chromosome"/>
</dbReference>
<dbReference type="Proteomes" id="UP000002519">
    <property type="component" value="Chromosome"/>
</dbReference>
<dbReference type="GO" id="GO:0004022">
    <property type="term" value="F:alcohol dehydrogenase (NAD+) activity"/>
    <property type="evidence" value="ECO:0007669"/>
    <property type="project" value="TreeGrafter"/>
</dbReference>
<dbReference type="GO" id="GO:0046872">
    <property type="term" value="F:metal ion binding"/>
    <property type="evidence" value="ECO:0007669"/>
    <property type="project" value="UniProtKB-KW"/>
</dbReference>
<dbReference type="GO" id="GO:0052660">
    <property type="term" value="F:R-lactaldehyde reductase activity"/>
    <property type="evidence" value="ECO:0007669"/>
    <property type="project" value="RHEA"/>
</dbReference>
<dbReference type="GO" id="GO:0052661">
    <property type="term" value="F:S-lactaldehyde reductase activity"/>
    <property type="evidence" value="ECO:0007669"/>
    <property type="project" value="RHEA"/>
</dbReference>
<dbReference type="GO" id="GO:0019317">
    <property type="term" value="P:fucose catabolic process"/>
    <property type="evidence" value="ECO:0007669"/>
    <property type="project" value="UniProtKB-UniPathway"/>
</dbReference>
<dbReference type="CDD" id="cd08176">
    <property type="entry name" value="LPO"/>
    <property type="match status" value="1"/>
</dbReference>
<dbReference type="FunFam" id="3.40.50.1970:FF:000003">
    <property type="entry name" value="Alcohol dehydrogenase, iron-containing"/>
    <property type="match status" value="1"/>
</dbReference>
<dbReference type="FunFam" id="1.20.1090.10:FF:000001">
    <property type="entry name" value="Aldehyde-alcohol dehydrogenase"/>
    <property type="match status" value="1"/>
</dbReference>
<dbReference type="Gene3D" id="3.40.50.1970">
    <property type="match status" value="1"/>
</dbReference>
<dbReference type="Gene3D" id="1.20.1090.10">
    <property type="entry name" value="Dehydroquinate synthase-like - alpha domain"/>
    <property type="match status" value="1"/>
</dbReference>
<dbReference type="InterPro" id="IPR001670">
    <property type="entry name" value="ADH_Fe/GldA"/>
</dbReference>
<dbReference type="InterPro" id="IPR056798">
    <property type="entry name" value="ADH_Fe_C"/>
</dbReference>
<dbReference type="InterPro" id="IPR018211">
    <property type="entry name" value="ADH_Fe_CS"/>
</dbReference>
<dbReference type="InterPro" id="IPR039697">
    <property type="entry name" value="Alcohol_dehydrogenase_Fe"/>
</dbReference>
<dbReference type="InterPro" id="IPR013460">
    <property type="entry name" value="Lactal_redase"/>
</dbReference>
<dbReference type="NCBIfam" id="TIGR02638">
    <property type="entry name" value="lactal_redase"/>
    <property type="match status" value="1"/>
</dbReference>
<dbReference type="NCBIfam" id="NF007911">
    <property type="entry name" value="PRK10624.1"/>
    <property type="match status" value="1"/>
</dbReference>
<dbReference type="PANTHER" id="PTHR11496">
    <property type="entry name" value="ALCOHOL DEHYDROGENASE"/>
    <property type="match status" value="1"/>
</dbReference>
<dbReference type="PANTHER" id="PTHR11496:SF106">
    <property type="entry name" value="LACTALDEHYDE REDUCTASE"/>
    <property type="match status" value="1"/>
</dbReference>
<dbReference type="Pfam" id="PF25137">
    <property type="entry name" value="ADH_Fe_C"/>
    <property type="match status" value="1"/>
</dbReference>
<dbReference type="Pfam" id="PF00465">
    <property type="entry name" value="Fe-ADH"/>
    <property type="match status" value="1"/>
</dbReference>
<dbReference type="SUPFAM" id="SSF56796">
    <property type="entry name" value="Dehydroquinate synthase-like"/>
    <property type="match status" value="1"/>
</dbReference>
<dbReference type="PROSITE" id="PS00913">
    <property type="entry name" value="ADH_IRON_1"/>
    <property type="match status" value="1"/>
</dbReference>
<dbReference type="PROSITE" id="PS00060">
    <property type="entry name" value="ADH_IRON_2"/>
    <property type="match status" value="1"/>
</dbReference>
<feature type="chain" id="PRO_0000087825" description="Lactaldehyde reductase">
    <location>
        <begin position="1"/>
        <end position="382"/>
    </location>
</feature>
<feature type="binding site" evidence="1">
    <location>
        <position position="38"/>
    </location>
    <ligand>
        <name>NAD(+)</name>
        <dbReference type="ChEBI" id="CHEBI:57540"/>
    </ligand>
</feature>
<feature type="binding site" evidence="1">
    <location>
        <position position="70"/>
    </location>
    <ligand>
        <name>NAD(+)</name>
        <dbReference type="ChEBI" id="CHEBI:57540"/>
    </ligand>
</feature>
<feature type="binding site" evidence="1">
    <location>
        <begin position="97"/>
        <end position="98"/>
    </location>
    <ligand>
        <name>NAD(+)</name>
        <dbReference type="ChEBI" id="CHEBI:57540"/>
    </ligand>
</feature>
<feature type="binding site" evidence="1">
    <location>
        <begin position="139"/>
        <end position="143"/>
    </location>
    <ligand>
        <name>NAD(+)</name>
        <dbReference type="ChEBI" id="CHEBI:57540"/>
    </ligand>
</feature>
<feature type="binding site" evidence="1">
    <location>
        <position position="150"/>
    </location>
    <ligand>
        <name>NAD(+)</name>
        <dbReference type="ChEBI" id="CHEBI:57540"/>
    </ligand>
</feature>
<feature type="binding site" evidence="1">
    <location>
        <position position="161"/>
    </location>
    <ligand>
        <name>NAD(+)</name>
        <dbReference type="ChEBI" id="CHEBI:57540"/>
    </ligand>
</feature>
<feature type="binding site" evidence="1">
    <location>
        <begin position="180"/>
        <end position="184"/>
    </location>
    <ligand>
        <name>NAD(+)</name>
        <dbReference type="ChEBI" id="CHEBI:57540"/>
    </ligand>
</feature>
<feature type="binding site" evidence="1">
    <location>
        <position position="195"/>
    </location>
    <ligand>
        <name>Fe cation</name>
        <dbReference type="ChEBI" id="CHEBI:24875"/>
    </ligand>
</feature>
<feature type="binding site" evidence="1">
    <location>
        <position position="199"/>
    </location>
    <ligand>
        <name>Fe cation</name>
        <dbReference type="ChEBI" id="CHEBI:24875"/>
    </ligand>
</feature>
<feature type="binding site" evidence="1">
    <location>
        <position position="262"/>
    </location>
    <ligand>
        <name>Fe cation</name>
        <dbReference type="ChEBI" id="CHEBI:24875"/>
    </ligand>
</feature>
<feature type="binding site" evidence="1">
    <location>
        <position position="276"/>
    </location>
    <ligand>
        <name>Fe cation</name>
        <dbReference type="ChEBI" id="CHEBI:24875"/>
    </ligand>
</feature>
<proteinExistence type="inferred from homology"/>
<protein>
    <recommendedName>
        <fullName>Lactaldehyde reductase</fullName>
        <ecNumber>1.1.1.77</ecNumber>
    </recommendedName>
    <alternativeName>
        <fullName>Propanediol oxidoreductase</fullName>
    </alternativeName>
</protein>
<accession>P0A9S2</accession>
<accession>P11549</accession>
<sequence length="382" mass="40513">MANRMILNETAWFGRGAVGALTDEVKRRGYQKALIVTDKTLVQCGVVAKVTDKMDAAGLAWAIYDGVVPNPTITVVKEGLGVFQNSGADYLIAIGGGSPQDTCKAIGIISNNPEFADVRSLEGLSPTNKPSVPILAIPTTAGTAAEVTINYVITDEEKRRKFVCVDPHDIPQVAFIDADMMDGMPPALKAATGVDALTHAIEGYITRGAWALTDALHIKAIEIIAGALRGSVAGDKDAGEEMALGQYVAGMGFSNVGLGLVHGMAHPLGAFYNTPHGVANAILLPHVMRYNADFTGEKYRDIARVMGVKVEGMSLEEARNAAVEAVFALNRDVGIPPHLRDVGVRKEDIPALAQAALDDVCTGGNPREATLEDIVELYHTAW</sequence>
<keyword id="KW-0119">Carbohydrate metabolism</keyword>
<keyword id="KW-0294">Fucose metabolism</keyword>
<keyword id="KW-0408">Iron</keyword>
<keyword id="KW-0479">Metal-binding</keyword>
<keyword id="KW-0520">NAD</keyword>
<keyword id="KW-0560">Oxidoreductase</keyword>
<keyword id="KW-1185">Reference proteome</keyword>
<gene>
    <name type="primary">fucO</name>
    <name type="ordered locus">Z4116</name>
    <name type="ordered locus">ECs3659</name>
</gene>
<evidence type="ECO:0000250" key="1"/>
<evidence type="ECO:0000305" key="2"/>
<name>FUCO_ECO57</name>
<reference key="1">
    <citation type="journal article" date="2001" name="Nature">
        <title>Genome sequence of enterohaemorrhagic Escherichia coli O157:H7.</title>
        <authorList>
            <person name="Perna N.T."/>
            <person name="Plunkett G. III"/>
            <person name="Burland V."/>
            <person name="Mau B."/>
            <person name="Glasner J.D."/>
            <person name="Rose D.J."/>
            <person name="Mayhew G.F."/>
            <person name="Evans P.S."/>
            <person name="Gregor J."/>
            <person name="Kirkpatrick H.A."/>
            <person name="Posfai G."/>
            <person name="Hackett J."/>
            <person name="Klink S."/>
            <person name="Boutin A."/>
            <person name="Shao Y."/>
            <person name="Miller L."/>
            <person name="Grotbeck E.J."/>
            <person name="Davis N.W."/>
            <person name="Lim A."/>
            <person name="Dimalanta E.T."/>
            <person name="Potamousis K."/>
            <person name="Apodaca J."/>
            <person name="Anantharaman T.S."/>
            <person name="Lin J."/>
            <person name="Yen G."/>
            <person name="Schwartz D.C."/>
            <person name="Welch R.A."/>
            <person name="Blattner F.R."/>
        </authorList>
    </citation>
    <scope>NUCLEOTIDE SEQUENCE [LARGE SCALE GENOMIC DNA]</scope>
    <source>
        <strain>O157:H7 / EDL933 / ATCC 700927 / EHEC</strain>
    </source>
</reference>
<reference key="2">
    <citation type="journal article" date="2001" name="DNA Res.">
        <title>Complete genome sequence of enterohemorrhagic Escherichia coli O157:H7 and genomic comparison with a laboratory strain K-12.</title>
        <authorList>
            <person name="Hayashi T."/>
            <person name="Makino K."/>
            <person name="Ohnishi M."/>
            <person name="Kurokawa K."/>
            <person name="Ishii K."/>
            <person name="Yokoyama K."/>
            <person name="Han C.-G."/>
            <person name="Ohtsubo E."/>
            <person name="Nakayama K."/>
            <person name="Murata T."/>
            <person name="Tanaka M."/>
            <person name="Tobe T."/>
            <person name="Iida T."/>
            <person name="Takami H."/>
            <person name="Honda T."/>
            <person name="Sasakawa C."/>
            <person name="Ogasawara N."/>
            <person name="Yasunaga T."/>
            <person name="Kuhara S."/>
            <person name="Shiba T."/>
            <person name="Hattori M."/>
            <person name="Shinagawa H."/>
        </authorList>
    </citation>
    <scope>NUCLEOTIDE SEQUENCE [LARGE SCALE GENOMIC DNA]</scope>
    <source>
        <strain>O157:H7 / Sakai / RIMD 0509952 / EHEC</strain>
    </source>
</reference>
<comment type="catalytic activity">
    <reaction>
        <text>(R)-propane-1,2-diol + NAD(+) = (R)-lactaldehyde + NADH + H(+)</text>
        <dbReference type="Rhea" id="RHEA:23872"/>
        <dbReference type="ChEBI" id="CHEBI:15378"/>
        <dbReference type="ChEBI" id="CHEBI:17167"/>
        <dbReference type="ChEBI" id="CHEBI:28972"/>
        <dbReference type="ChEBI" id="CHEBI:57540"/>
        <dbReference type="ChEBI" id="CHEBI:57945"/>
        <dbReference type="EC" id="1.1.1.77"/>
    </reaction>
</comment>
<comment type="catalytic activity">
    <reaction>
        <text>(S)-propane-1,2-diol + NAD(+) = (S)-lactaldehyde + NADH + H(+)</text>
        <dbReference type="Rhea" id="RHEA:15933"/>
        <dbReference type="ChEBI" id="CHEBI:15378"/>
        <dbReference type="ChEBI" id="CHEBI:18041"/>
        <dbReference type="ChEBI" id="CHEBI:29002"/>
        <dbReference type="ChEBI" id="CHEBI:57540"/>
        <dbReference type="ChEBI" id="CHEBI:57945"/>
        <dbReference type="EC" id="1.1.1.77"/>
    </reaction>
</comment>
<comment type="cofactor">
    <cofactor evidence="1">
        <name>Fe cation</name>
        <dbReference type="ChEBI" id="CHEBI:24875"/>
    </cofactor>
</comment>
<comment type="pathway">
    <text>Carbohydrate degradation; L-fucose degradation.</text>
</comment>
<comment type="subunit">
    <text evidence="1">Homodimer.</text>
</comment>
<comment type="similarity">
    <text evidence="2">Belongs to the iron-containing alcohol dehydrogenase family.</text>
</comment>
<comment type="sequence caution" evidence="2">
    <conflict type="erroneous initiation">
        <sequence resource="EMBL-CDS" id="AAG57913"/>
    </conflict>
    <text>Extended N-terminus.</text>
</comment>